<name>EL2A_HORSE</name>
<proteinExistence type="evidence at protein level"/>
<dbReference type="EC" id="3.4.21.-"/>
<dbReference type="PIR" id="S44461">
    <property type="entry name" value="S44461"/>
</dbReference>
<dbReference type="MEROPS" id="S01.131"/>
<dbReference type="PeptideAtlas" id="P37357"/>
<dbReference type="InParanoid" id="P37357"/>
<dbReference type="Proteomes" id="UP000002281">
    <property type="component" value="Unplaced"/>
</dbReference>
<dbReference type="GO" id="GO:0004252">
    <property type="term" value="F:serine-type endopeptidase activity"/>
    <property type="evidence" value="ECO:0007669"/>
    <property type="project" value="InterPro"/>
</dbReference>
<dbReference type="GO" id="GO:0006508">
    <property type="term" value="P:proteolysis"/>
    <property type="evidence" value="ECO:0007669"/>
    <property type="project" value="UniProtKB-KW"/>
</dbReference>
<dbReference type="FunFam" id="2.40.10.10:FF:000372">
    <property type="entry name" value="Myeloblastin"/>
    <property type="match status" value="1"/>
</dbReference>
<dbReference type="Gene3D" id="2.40.10.10">
    <property type="entry name" value="Trypsin-like serine proteases"/>
    <property type="match status" value="2"/>
</dbReference>
<dbReference type="InterPro" id="IPR050850">
    <property type="entry name" value="Peptidase_S1_Elastase_sf"/>
</dbReference>
<dbReference type="InterPro" id="IPR009003">
    <property type="entry name" value="Peptidase_S1_PA"/>
</dbReference>
<dbReference type="InterPro" id="IPR043504">
    <property type="entry name" value="Peptidase_S1_PA_chymotrypsin"/>
</dbReference>
<dbReference type="InterPro" id="IPR001254">
    <property type="entry name" value="Trypsin_dom"/>
</dbReference>
<dbReference type="InterPro" id="IPR033116">
    <property type="entry name" value="TRYPSIN_SER"/>
</dbReference>
<dbReference type="PANTHER" id="PTHR24257">
    <property type="entry name" value="CHYMOTRYPSIN-LIKE ELASTASE FAMILY MEMBER"/>
    <property type="match status" value="1"/>
</dbReference>
<dbReference type="PANTHER" id="PTHR24257:SF15">
    <property type="entry name" value="MYELOBLASTIN"/>
    <property type="match status" value="1"/>
</dbReference>
<dbReference type="Pfam" id="PF00089">
    <property type="entry name" value="Trypsin"/>
    <property type="match status" value="2"/>
</dbReference>
<dbReference type="SUPFAM" id="SSF50494">
    <property type="entry name" value="Trypsin-like serine proteases"/>
    <property type="match status" value="1"/>
</dbReference>
<dbReference type="PROSITE" id="PS00135">
    <property type="entry name" value="TRYPSIN_SER"/>
    <property type="match status" value="1"/>
</dbReference>
<accession>P37357</accession>
<feature type="chain" id="PRO_0000088680" description="Neutrophil elastase 2A">
    <location>
        <begin position="1"/>
        <end position="85"/>
    </location>
</feature>
<feature type="domain" description="Peptidase S1" evidence="1">
    <location>
        <begin position="1"/>
        <end position="85"/>
    </location>
</feature>
<feature type="active site" description="Charge relay system">
    <location>
        <position position="67"/>
    </location>
</feature>
<feature type="non-consecutive residues" evidence="2">
    <location>
        <begin position="34"/>
        <end position="35"/>
    </location>
</feature>
<feature type="non-consecutive residues" evidence="2">
    <location>
        <begin position="59"/>
        <end position="60"/>
    </location>
</feature>
<sequence length="85" mass="8893">IVGGRAAEPHSRPYMVSLQIRGNPGSHFCGGTLIMGWGRLGTREPLPXVLQELNVTVVTAGICFGDSGGPLICNGVAQGVFSFVR</sequence>
<comment type="function">
    <text>May be involved in the degradation of connective tissue in chronic lung disease.</text>
</comment>
<comment type="similarity">
    <text evidence="1">Belongs to the peptidase S1 family. Elastase subfamily.</text>
</comment>
<evidence type="ECO:0000255" key="1">
    <source>
        <dbReference type="PROSITE-ProRule" id="PRU00274"/>
    </source>
</evidence>
<evidence type="ECO:0000305" key="2"/>
<organism>
    <name type="scientific">Equus caballus</name>
    <name type="common">Horse</name>
    <dbReference type="NCBI Taxonomy" id="9796"/>
    <lineage>
        <taxon>Eukaryota</taxon>
        <taxon>Metazoa</taxon>
        <taxon>Chordata</taxon>
        <taxon>Craniata</taxon>
        <taxon>Vertebrata</taxon>
        <taxon>Euteleostomi</taxon>
        <taxon>Mammalia</taxon>
        <taxon>Eutheria</taxon>
        <taxon>Laurasiatheria</taxon>
        <taxon>Perissodactyla</taxon>
        <taxon>Equidae</taxon>
        <taxon>Equus</taxon>
    </lineage>
</organism>
<protein>
    <recommendedName>
        <fullName>Neutrophil elastase 2A</fullName>
        <ecNumber>3.4.21.-</ecNumber>
    </recommendedName>
    <alternativeName>
        <fullName>Proteinase 2A</fullName>
    </alternativeName>
</protein>
<reference key="1">
    <citation type="journal article" date="1994" name="Biochem. J.">
        <title>Structural and functional characterization of elastases from horse neutrophils.</title>
        <authorList>
            <person name="Dubin A."/>
            <person name="Potempa J."/>
            <person name="Travis J."/>
        </authorList>
    </citation>
    <scope>PROTEIN SEQUENCE</scope>
    <source>
        <tissue>Neutrophil</tissue>
    </source>
</reference>
<keyword id="KW-0903">Direct protein sequencing</keyword>
<keyword id="KW-0378">Hydrolase</keyword>
<keyword id="KW-0645">Protease</keyword>
<keyword id="KW-1185">Reference proteome</keyword>
<keyword id="KW-0720">Serine protease</keyword>